<reference key="1">
    <citation type="journal article" date="2003" name="Proc. Natl. Acad. Sci. U.S.A.">
        <title>Complete genome sequence of the Q-fever pathogen, Coxiella burnetii.</title>
        <authorList>
            <person name="Seshadri R."/>
            <person name="Paulsen I.T."/>
            <person name="Eisen J.A."/>
            <person name="Read T.D."/>
            <person name="Nelson K.E."/>
            <person name="Nelson W.C."/>
            <person name="Ward N.L."/>
            <person name="Tettelin H."/>
            <person name="Davidsen T.M."/>
            <person name="Beanan M.J."/>
            <person name="DeBoy R.T."/>
            <person name="Daugherty S.C."/>
            <person name="Brinkac L.M."/>
            <person name="Madupu R."/>
            <person name="Dodson R.J."/>
            <person name="Khouri H.M."/>
            <person name="Lee K.H."/>
            <person name="Carty H.A."/>
            <person name="Scanlan D."/>
            <person name="Heinzen R.A."/>
            <person name="Thompson H.A."/>
            <person name="Samuel J.E."/>
            <person name="Fraser C.M."/>
            <person name="Heidelberg J.F."/>
        </authorList>
    </citation>
    <scope>NUCLEOTIDE SEQUENCE [LARGE SCALE GENOMIC DNA]</scope>
    <source>
        <strain>RSA 493 / Nine Mile phase I</strain>
    </source>
</reference>
<dbReference type="EMBL" id="AE016828">
    <property type="protein sequence ID" value="AAO89849.1"/>
    <property type="molecule type" value="Genomic_DNA"/>
</dbReference>
<dbReference type="RefSeq" id="NP_819335.1">
    <property type="nucleotide sequence ID" value="NC_002971.4"/>
</dbReference>
<dbReference type="RefSeq" id="WP_005771445.1">
    <property type="nucleotide sequence ID" value="NZ_CDBG01000001.1"/>
</dbReference>
<dbReference type="SMR" id="Q83EM4"/>
<dbReference type="STRING" id="227377.CBU_0291"/>
<dbReference type="DNASU" id="1208173"/>
<dbReference type="EnsemblBacteria" id="AAO89849">
    <property type="protein sequence ID" value="AAO89849"/>
    <property type="gene ID" value="CBU_0291"/>
</dbReference>
<dbReference type="GeneID" id="1208173"/>
<dbReference type="KEGG" id="cbu:CBU_0291"/>
<dbReference type="PATRIC" id="fig|227377.7.peg.284"/>
<dbReference type="eggNOG" id="COG0227">
    <property type="taxonomic scope" value="Bacteria"/>
</dbReference>
<dbReference type="HOGENOM" id="CLU_064548_3_1_6"/>
<dbReference type="OrthoDB" id="9805609at2"/>
<dbReference type="Proteomes" id="UP000002671">
    <property type="component" value="Chromosome"/>
</dbReference>
<dbReference type="GO" id="GO:0022625">
    <property type="term" value="C:cytosolic large ribosomal subunit"/>
    <property type="evidence" value="ECO:0000318"/>
    <property type="project" value="GO_Central"/>
</dbReference>
<dbReference type="GO" id="GO:0003735">
    <property type="term" value="F:structural constituent of ribosome"/>
    <property type="evidence" value="ECO:0000318"/>
    <property type="project" value="GO_Central"/>
</dbReference>
<dbReference type="GO" id="GO:0006412">
    <property type="term" value="P:translation"/>
    <property type="evidence" value="ECO:0007669"/>
    <property type="project" value="UniProtKB-UniRule"/>
</dbReference>
<dbReference type="FunFam" id="2.30.170.40:FF:000001">
    <property type="entry name" value="50S ribosomal protein L28"/>
    <property type="match status" value="1"/>
</dbReference>
<dbReference type="Gene3D" id="2.30.170.40">
    <property type="entry name" value="Ribosomal protein L28/L24"/>
    <property type="match status" value="1"/>
</dbReference>
<dbReference type="HAMAP" id="MF_00373">
    <property type="entry name" value="Ribosomal_bL28"/>
    <property type="match status" value="1"/>
</dbReference>
<dbReference type="InterPro" id="IPR026569">
    <property type="entry name" value="Ribosomal_bL28"/>
</dbReference>
<dbReference type="InterPro" id="IPR034704">
    <property type="entry name" value="Ribosomal_bL28/bL31-like_sf"/>
</dbReference>
<dbReference type="InterPro" id="IPR001383">
    <property type="entry name" value="Ribosomal_bL28_bact-type"/>
</dbReference>
<dbReference type="InterPro" id="IPR037147">
    <property type="entry name" value="Ribosomal_bL28_sf"/>
</dbReference>
<dbReference type="NCBIfam" id="TIGR00009">
    <property type="entry name" value="L28"/>
    <property type="match status" value="1"/>
</dbReference>
<dbReference type="PANTHER" id="PTHR13528">
    <property type="entry name" value="39S RIBOSOMAL PROTEIN L28, MITOCHONDRIAL"/>
    <property type="match status" value="1"/>
</dbReference>
<dbReference type="PANTHER" id="PTHR13528:SF2">
    <property type="entry name" value="LARGE RIBOSOMAL SUBUNIT PROTEIN BL28M"/>
    <property type="match status" value="1"/>
</dbReference>
<dbReference type="Pfam" id="PF00830">
    <property type="entry name" value="Ribosomal_L28"/>
    <property type="match status" value="1"/>
</dbReference>
<dbReference type="SUPFAM" id="SSF143800">
    <property type="entry name" value="L28p-like"/>
    <property type="match status" value="1"/>
</dbReference>
<name>RL28_COXBU</name>
<accession>Q83EM4</accession>
<proteinExistence type="inferred from homology"/>
<feature type="chain" id="PRO_0000178464" description="Large ribosomal subunit protein bL28">
    <location>
        <begin position="1"/>
        <end position="79"/>
    </location>
</feature>
<feature type="region of interest" description="Disordered" evidence="2">
    <location>
        <begin position="1"/>
        <end position="26"/>
    </location>
</feature>
<feature type="compositionally biased region" description="Polar residues" evidence="2">
    <location>
        <begin position="11"/>
        <end position="20"/>
    </location>
</feature>
<sequence>MAKVCQVTGKRPQSGNNVSHANKKTNRRFLPNLKKRRFWLPDEKRFITLTVSTHGMRIIDKLGINAVLKKIREREKESK</sequence>
<comment type="similarity">
    <text evidence="1">Belongs to the bacterial ribosomal protein bL28 family.</text>
</comment>
<organism>
    <name type="scientific">Coxiella burnetii (strain RSA 493 / Nine Mile phase I)</name>
    <dbReference type="NCBI Taxonomy" id="227377"/>
    <lineage>
        <taxon>Bacteria</taxon>
        <taxon>Pseudomonadati</taxon>
        <taxon>Pseudomonadota</taxon>
        <taxon>Gammaproteobacteria</taxon>
        <taxon>Legionellales</taxon>
        <taxon>Coxiellaceae</taxon>
        <taxon>Coxiella</taxon>
    </lineage>
</organism>
<keyword id="KW-1185">Reference proteome</keyword>
<keyword id="KW-0687">Ribonucleoprotein</keyword>
<keyword id="KW-0689">Ribosomal protein</keyword>
<gene>
    <name evidence="1" type="primary">rpmB</name>
    <name type="ordered locus">CBU_0291</name>
</gene>
<protein>
    <recommendedName>
        <fullName evidence="1">Large ribosomal subunit protein bL28</fullName>
    </recommendedName>
    <alternativeName>
        <fullName evidence="3">50S ribosomal protein L28</fullName>
    </alternativeName>
</protein>
<evidence type="ECO:0000255" key="1">
    <source>
        <dbReference type="HAMAP-Rule" id="MF_00373"/>
    </source>
</evidence>
<evidence type="ECO:0000256" key="2">
    <source>
        <dbReference type="SAM" id="MobiDB-lite"/>
    </source>
</evidence>
<evidence type="ECO:0000305" key="3"/>